<comment type="function">
    <text evidence="1">One of the primary rRNA binding proteins, it binds directly near the 3'-end of the 23S rRNA, where it nucleates assembly of the 50S subunit.</text>
</comment>
<comment type="subunit">
    <text evidence="1">Part of the 50S ribosomal subunit. Forms a cluster with proteins L14 and L19.</text>
</comment>
<comment type="PTM">
    <text evidence="1">Methylated by PrmB.</text>
</comment>
<comment type="similarity">
    <text evidence="1">Belongs to the universal ribosomal protein uL3 family.</text>
</comment>
<sequence>MRTGVIAKKMGMTRLFQDDGRHVPVTVLSLEGCQVVSVRDKERDGYVAVQLGAGTAKAKNVAKPQRGAYGKAEVEPKAKLVEFRVADDATLDVGAELSADHFVAGQMVDIQGVTQGKGFAGAMKRWGFGGMRATHGVSISHRAHGSTGNRQDPGRVFKNKKMAGHMGARNRTQQNLEIVRTDAERGLLFVKGSVPGSKGGWLLVRDAVKLPRHPEAPYPASIKSAANTNTAPADAPVETPAEEAVVDTAATDGAQES</sequence>
<reference key="1">
    <citation type="journal article" date="2009" name="Proc. Natl. Acad. Sci. U.S.A.">
        <title>The genomic basis of trophic strategy in marine bacteria.</title>
        <authorList>
            <person name="Lauro F.M."/>
            <person name="McDougald D."/>
            <person name="Thomas T."/>
            <person name="Williams T.J."/>
            <person name="Egan S."/>
            <person name="Rice S."/>
            <person name="DeMaere M.Z."/>
            <person name="Ting L."/>
            <person name="Ertan H."/>
            <person name="Johnson J."/>
            <person name="Ferriera S."/>
            <person name="Lapidus A."/>
            <person name="Anderson I."/>
            <person name="Kyrpides N."/>
            <person name="Munk A.C."/>
            <person name="Detter C."/>
            <person name="Han C.S."/>
            <person name="Brown M.V."/>
            <person name="Robb F.T."/>
            <person name="Kjelleberg S."/>
            <person name="Cavicchioli R."/>
        </authorList>
    </citation>
    <scope>NUCLEOTIDE SEQUENCE [LARGE SCALE GENOMIC DNA]</scope>
    <source>
        <strain>DSM 13593 / LMG 18877 / RB2256</strain>
    </source>
</reference>
<accession>Q1GP99</accession>
<feature type="chain" id="PRO_1000052147" description="Large ribosomal subunit protein uL3">
    <location>
        <begin position="1"/>
        <end position="257"/>
    </location>
</feature>
<feature type="region of interest" description="Disordered" evidence="2">
    <location>
        <begin position="218"/>
        <end position="257"/>
    </location>
</feature>
<feature type="compositionally biased region" description="Low complexity" evidence="2">
    <location>
        <begin position="225"/>
        <end position="236"/>
    </location>
</feature>
<feature type="modified residue" description="N5-methylglutamine" evidence="1">
    <location>
        <position position="151"/>
    </location>
</feature>
<keyword id="KW-0488">Methylation</keyword>
<keyword id="KW-1185">Reference proteome</keyword>
<keyword id="KW-0687">Ribonucleoprotein</keyword>
<keyword id="KW-0689">Ribosomal protein</keyword>
<keyword id="KW-0694">RNA-binding</keyword>
<keyword id="KW-0699">rRNA-binding</keyword>
<organism>
    <name type="scientific">Sphingopyxis alaskensis (strain DSM 13593 / LMG 18877 / RB2256)</name>
    <name type="common">Sphingomonas alaskensis</name>
    <dbReference type="NCBI Taxonomy" id="317655"/>
    <lineage>
        <taxon>Bacteria</taxon>
        <taxon>Pseudomonadati</taxon>
        <taxon>Pseudomonadota</taxon>
        <taxon>Alphaproteobacteria</taxon>
        <taxon>Sphingomonadales</taxon>
        <taxon>Sphingomonadaceae</taxon>
        <taxon>Sphingopyxis</taxon>
    </lineage>
</organism>
<proteinExistence type="inferred from homology"/>
<gene>
    <name evidence="1" type="primary">rplC</name>
    <name type="ordered locus">Sala_2818</name>
</gene>
<evidence type="ECO:0000255" key="1">
    <source>
        <dbReference type="HAMAP-Rule" id="MF_01325"/>
    </source>
</evidence>
<evidence type="ECO:0000256" key="2">
    <source>
        <dbReference type="SAM" id="MobiDB-lite"/>
    </source>
</evidence>
<evidence type="ECO:0000305" key="3"/>
<protein>
    <recommendedName>
        <fullName evidence="1">Large ribosomal subunit protein uL3</fullName>
    </recommendedName>
    <alternativeName>
        <fullName evidence="3">50S ribosomal protein L3</fullName>
    </alternativeName>
</protein>
<dbReference type="EMBL" id="CP000356">
    <property type="protein sequence ID" value="ABF54523.1"/>
    <property type="molecule type" value="Genomic_DNA"/>
</dbReference>
<dbReference type="RefSeq" id="WP_011543088.1">
    <property type="nucleotide sequence ID" value="NC_008048.1"/>
</dbReference>
<dbReference type="SMR" id="Q1GP99"/>
<dbReference type="STRING" id="317655.Sala_2818"/>
<dbReference type="KEGG" id="sal:Sala_2818"/>
<dbReference type="eggNOG" id="COG0087">
    <property type="taxonomic scope" value="Bacteria"/>
</dbReference>
<dbReference type="HOGENOM" id="CLU_044142_2_0_5"/>
<dbReference type="OrthoDB" id="9806135at2"/>
<dbReference type="Proteomes" id="UP000006578">
    <property type="component" value="Chromosome"/>
</dbReference>
<dbReference type="GO" id="GO:0022625">
    <property type="term" value="C:cytosolic large ribosomal subunit"/>
    <property type="evidence" value="ECO:0007669"/>
    <property type="project" value="TreeGrafter"/>
</dbReference>
<dbReference type="GO" id="GO:0019843">
    <property type="term" value="F:rRNA binding"/>
    <property type="evidence" value="ECO:0007669"/>
    <property type="project" value="UniProtKB-UniRule"/>
</dbReference>
<dbReference type="GO" id="GO:0003735">
    <property type="term" value="F:structural constituent of ribosome"/>
    <property type="evidence" value="ECO:0007669"/>
    <property type="project" value="InterPro"/>
</dbReference>
<dbReference type="GO" id="GO:0006412">
    <property type="term" value="P:translation"/>
    <property type="evidence" value="ECO:0007669"/>
    <property type="project" value="UniProtKB-UniRule"/>
</dbReference>
<dbReference type="FunFam" id="2.40.30.10:FF:000004">
    <property type="entry name" value="50S ribosomal protein L3"/>
    <property type="match status" value="1"/>
</dbReference>
<dbReference type="FunFam" id="3.30.160.810:FF:000001">
    <property type="entry name" value="50S ribosomal protein L3"/>
    <property type="match status" value="1"/>
</dbReference>
<dbReference type="Gene3D" id="3.30.160.810">
    <property type="match status" value="1"/>
</dbReference>
<dbReference type="Gene3D" id="2.40.30.10">
    <property type="entry name" value="Translation factors"/>
    <property type="match status" value="1"/>
</dbReference>
<dbReference type="HAMAP" id="MF_01325_B">
    <property type="entry name" value="Ribosomal_uL3_B"/>
    <property type="match status" value="1"/>
</dbReference>
<dbReference type="InterPro" id="IPR000597">
    <property type="entry name" value="Ribosomal_uL3"/>
</dbReference>
<dbReference type="InterPro" id="IPR019927">
    <property type="entry name" value="Ribosomal_uL3_bac/org-type"/>
</dbReference>
<dbReference type="InterPro" id="IPR019926">
    <property type="entry name" value="Ribosomal_uL3_CS"/>
</dbReference>
<dbReference type="InterPro" id="IPR009000">
    <property type="entry name" value="Transl_B-barrel_sf"/>
</dbReference>
<dbReference type="NCBIfam" id="TIGR03625">
    <property type="entry name" value="L3_bact"/>
    <property type="match status" value="1"/>
</dbReference>
<dbReference type="PANTHER" id="PTHR11229">
    <property type="entry name" value="50S RIBOSOMAL PROTEIN L3"/>
    <property type="match status" value="1"/>
</dbReference>
<dbReference type="PANTHER" id="PTHR11229:SF16">
    <property type="entry name" value="LARGE RIBOSOMAL SUBUNIT PROTEIN UL3C"/>
    <property type="match status" value="1"/>
</dbReference>
<dbReference type="Pfam" id="PF00297">
    <property type="entry name" value="Ribosomal_L3"/>
    <property type="match status" value="1"/>
</dbReference>
<dbReference type="SUPFAM" id="SSF50447">
    <property type="entry name" value="Translation proteins"/>
    <property type="match status" value="1"/>
</dbReference>
<dbReference type="PROSITE" id="PS00474">
    <property type="entry name" value="RIBOSOMAL_L3"/>
    <property type="match status" value="1"/>
</dbReference>
<name>RL3_SPHAL</name>